<reference key="1">
    <citation type="submission" date="2008-09" db="EMBL/GenBank/DDBJ databases">
        <title>Genome sequence of Bacillus cereus H3081.97.</title>
        <authorList>
            <person name="Dodson R.J."/>
            <person name="Durkin A.S."/>
            <person name="Rosovitz M.J."/>
            <person name="Rasko D.A."/>
            <person name="Hoffmaster A."/>
            <person name="Ravel J."/>
            <person name="Sutton G."/>
        </authorList>
    </citation>
    <scope>NUCLEOTIDE SEQUENCE [LARGE SCALE GENOMIC DNA]</scope>
    <source>
        <strain>H3081.97</strain>
    </source>
</reference>
<reference key="2">
    <citation type="journal article" date="2015" name="EMBO J.">
        <title>BREX is a novel phage resistance system widespread in microbial genomes.</title>
        <authorList>
            <person name="Goldfarb T."/>
            <person name="Sberro H."/>
            <person name="Weinstock E."/>
            <person name="Cohen O."/>
            <person name="Doron S."/>
            <person name="Charpak-Amikam Y."/>
            <person name="Afik S."/>
            <person name="Ofir G."/>
            <person name="Sorek R."/>
        </authorList>
    </citation>
    <scope>FUNCTION IN ANTIVIRAL DEFENSE</scope>
    <scope>INDUCTION</scope>
    <scope>CLASSIFICATION AND NOMENCLATURE</scope>
    <source>
        <strain>H3081.97</strain>
    </source>
</reference>
<feature type="chain" id="PRO_0000452152" description="BREX protein BrxA">
    <location>
        <begin position="1"/>
        <end position="200"/>
    </location>
</feature>
<organism>
    <name type="scientific">Bacillus cereus (strain H3081.97)</name>
    <dbReference type="NCBI Taxonomy" id="451708"/>
    <lineage>
        <taxon>Bacteria</taxon>
        <taxon>Bacillati</taxon>
        <taxon>Bacillota</taxon>
        <taxon>Bacilli</taxon>
        <taxon>Bacillales</taxon>
        <taxon>Bacillaceae</taxon>
        <taxon>Bacillus</taxon>
        <taxon>Bacillus cereus group</taxon>
    </lineage>
</organism>
<accession>P0DUF0</accession>
<comment type="function">
    <text evidence="1">BREX systems (bacteriophage exclusion) provide immunity against bacteriophage. Part of a type 1 BREX system. This system allows phage adsorption but prevents phage DNA replication, without degradation of the phage DNA. Methylation of bacterial DNA by PglX probably guides self/non-self discrimination. When the brxA-brxB-brxC-pglX and pglZ-brxL operons are transformed into a susceptible B.subtilis strain (BEST7003) they confer resistance to bacteriophages SPbeta, SP16, Zeta, phi3T and SP02 and partial protection to phages SP01 and SP82G (these include lytic and temperate phage). They do not protect against phages phi105, rho10 or rho14. Additionally confers a very slight reduction in efficiency of plasmid transformation.</text>
</comment>
<comment type="induction">
    <text evidence="1">Part of the brxA-brxB-brxC-pglX operon.</text>
</comment>
<comment type="similarity">
    <text evidence="3">Belongs to the BrxA family.</text>
</comment>
<sequence>MVKEQVYKSTIKSRPLLFLEMKKVSILLNKGFKEFEVKEKAISENIFQVNTESRKKEIASSVLARLKILDDYLIREIGHGDIESSKAIVLYSIMKTDRLFFEFMNEVFKEKFVFGETFLTDADFNIFFENKQQQSEKVASWNDYTFYKLKQVYIRILFEAGYLKNQKGNREIERPLLNIDVVEHIRALGDGIYMDILVGE</sequence>
<protein>
    <recommendedName>
        <fullName evidence="2">BREX protein BrxA</fullName>
    </recommendedName>
    <alternativeName>
        <fullName evidence="2">NusB-like RNA-binding protein</fullName>
    </alternativeName>
</protein>
<keyword id="KW-0051">Antiviral defense</keyword>
<dbReference type="EMBL" id="ABDL02000007">
    <property type="protein sequence ID" value="EDZ57423.1"/>
    <property type="molecule type" value="Genomic_DNA"/>
</dbReference>
<dbReference type="SMR" id="P0DUF0"/>
<dbReference type="GO" id="GO:0051607">
    <property type="term" value="P:defense response to virus"/>
    <property type="evidence" value="ECO:0007669"/>
    <property type="project" value="UniProtKB-KW"/>
</dbReference>
<dbReference type="Gene3D" id="1.10.3540.10">
    <property type="entry name" value="uncharacterized protein from magnetospirillum magneticum domain"/>
    <property type="match status" value="1"/>
</dbReference>
<dbReference type="InterPro" id="IPR014948">
    <property type="entry name" value="BrxA"/>
</dbReference>
<dbReference type="InterPro" id="IPR023137">
    <property type="entry name" value="BrxA_sf"/>
</dbReference>
<dbReference type="Pfam" id="PF08849">
    <property type="entry name" value="BrxA"/>
    <property type="match status" value="1"/>
</dbReference>
<evidence type="ECO:0000269" key="1">
    <source>
    </source>
</evidence>
<evidence type="ECO:0000303" key="2">
    <source>
    </source>
</evidence>
<evidence type="ECO:0000305" key="3"/>
<gene>
    <name evidence="2" type="primary">brxA</name>
    <name type="ORF">BCH308197_0963</name>
</gene>
<proteinExistence type="evidence at protein level"/>
<name>BRXA_BACCH</name>